<comment type="function">
    <text evidence="6 7 8">Sesquiterpene synthase involved in the production after herbivore attack of a blend of volatiles that attracts natural enemies of herbivores (PubMed:15075399, PubMed:21607717). Converts farnesyl diphosphate to sesquithujene, (S)-beta-bisabolene, (Z)-alpha-bergamotene, sesquisabinene B and several minor products (PubMed:15075399, PubMed:21607717, PubMed:25940560). Can also act in vitro as a monoterpene synthase, converting geranyl diphosphate to (S)-(-)-limonene, beta-myrcene and 11 other monoterpenes (PubMed:15075399, PubMed:25940560).</text>
</comment>
<comment type="catalytic activity">
    <reaction evidence="6 7 8">
        <text>(2E,6E)-farnesyl diphosphate = sesquithujene + diphosphate</text>
        <dbReference type="Rhea" id="RHEA:31991"/>
        <dbReference type="ChEBI" id="CHEBI:33019"/>
        <dbReference type="ChEBI" id="CHEBI:63711"/>
        <dbReference type="ChEBI" id="CHEBI:175763"/>
        <dbReference type="EC" id="4.2.3.102"/>
    </reaction>
    <physiologicalReaction direction="left-to-right" evidence="6 7 8">
        <dbReference type="Rhea" id="RHEA:31992"/>
    </physiologicalReaction>
</comment>
<comment type="catalytic activity">
    <reaction evidence="6 8">
        <text>(2Z,6Z)-farnesyl diphosphate = (1S,5S,6S)-alpha-bergamotene + diphosphate</text>
        <dbReference type="Rhea" id="RHEA:30471"/>
        <dbReference type="ChEBI" id="CHEBI:33019"/>
        <dbReference type="ChEBI" id="CHEBI:60374"/>
        <dbReference type="ChEBI" id="CHEBI:61679"/>
        <dbReference type="EC" id="4.2.3.54"/>
    </reaction>
    <physiologicalReaction direction="left-to-right" evidence="6 8">
        <dbReference type="Rhea" id="RHEA:30472"/>
    </physiologicalReaction>
</comment>
<comment type="catalytic activity">
    <reaction evidence="6 8">
        <text>(2E,6E)-farnesyl diphosphate = (E)-beta-farnesene + diphosphate</text>
        <dbReference type="Rhea" id="RHEA:27425"/>
        <dbReference type="ChEBI" id="CHEBI:10418"/>
        <dbReference type="ChEBI" id="CHEBI:33019"/>
        <dbReference type="ChEBI" id="CHEBI:175763"/>
        <dbReference type="EC" id="4.2.3.47"/>
    </reaction>
    <physiologicalReaction direction="left-to-right" evidence="6 8">
        <dbReference type="Rhea" id="RHEA:27426"/>
    </physiologicalReaction>
</comment>
<comment type="catalytic activity">
    <reaction evidence="6 7 8">
        <text>(2E,6E)-farnesyl diphosphate = (S)-beta-bisabolene + diphosphate</text>
        <dbReference type="Rhea" id="RHEA:28266"/>
        <dbReference type="ChEBI" id="CHEBI:33019"/>
        <dbReference type="ChEBI" id="CHEBI:49263"/>
        <dbReference type="ChEBI" id="CHEBI:175763"/>
        <dbReference type="EC" id="4.2.3.55"/>
    </reaction>
    <physiologicalReaction direction="left-to-right" evidence="6 7 8">
        <dbReference type="Rhea" id="RHEA:28267"/>
    </physiologicalReaction>
</comment>
<comment type="catalytic activity">
    <reaction evidence="6 8">
        <text>(2Z,6E)-farnesyl diphosphate = (-)-beta-curcumene + diphosphate</text>
        <dbReference type="Rhea" id="RHEA:31419"/>
        <dbReference type="ChEBI" id="CHEBI:33019"/>
        <dbReference type="ChEBI" id="CHEBI:62760"/>
        <dbReference type="ChEBI" id="CHEBI:162247"/>
    </reaction>
    <physiologicalReaction direction="left-to-right" evidence="6 8">
        <dbReference type="Rhea" id="RHEA:31420"/>
    </physiologicalReaction>
</comment>
<comment type="catalytic activity">
    <reaction evidence="6 8">
        <text>(2E,6E)-farnesyl diphosphate = gamma-curcumene + diphosphate</text>
        <dbReference type="Rhea" id="RHEA:32031"/>
        <dbReference type="ChEBI" id="CHEBI:33019"/>
        <dbReference type="ChEBI" id="CHEBI:63696"/>
        <dbReference type="ChEBI" id="CHEBI:175763"/>
        <dbReference type="EC" id="4.2.3.94"/>
    </reaction>
    <physiologicalReaction direction="left-to-right" evidence="6 8">
        <dbReference type="Rhea" id="RHEA:32032"/>
    </physiologicalReaction>
</comment>
<comment type="catalytic activity">
    <reaction evidence="6 8">
        <text>(2E,6E)-farnesyl diphosphate = sesquisabinene B + diphosphate</text>
        <dbReference type="Rhea" id="RHEA:60016"/>
        <dbReference type="ChEBI" id="CHEBI:33019"/>
        <dbReference type="ChEBI" id="CHEBI:143550"/>
        <dbReference type="ChEBI" id="CHEBI:175763"/>
    </reaction>
    <physiologicalReaction direction="left-to-right" evidence="6 8">
        <dbReference type="Rhea" id="RHEA:60017"/>
    </physiologicalReaction>
</comment>
<comment type="cofactor">
    <cofactor evidence="6">
        <name>Mg(2+)</name>
        <dbReference type="ChEBI" id="CHEBI:18420"/>
    </cofactor>
    <cofactor evidence="6">
        <name>Mn(2+)</name>
        <dbReference type="ChEBI" id="CHEBI:29035"/>
    </cofactor>
    <text evidence="3">Binds 3 Mg(2+) or Mn(2+) ions per subunit.</text>
</comment>
<comment type="pathway">
    <text evidence="12">Secondary metabolite biosynthesis; terpenoid biosynthesis.</text>
</comment>
<comment type="subunit">
    <text evidence="4">Monomer.</text>
</comment>
<comment type="subcellular location">
    <subcellularLocation>
        <location evidence="5">Cytoplasm</location>
    </subcellularLocation>
</comment>
<comment type="tissue specificity">
    <text evidence="6">Highly expressed in the husk. Detected in leaves.</text>
</comment>
<comment type="domain">
    <text evidence="1">The Asp-Asp-Xaa-Xaa-Asp/Glu (DDXXD/E) motif is important for the catalytic activity, presumably through binding to Mg(2+).</text>
</comment>
<comment type="miscellaneous">
    <text evidence="11">The allele found in cv. B73 encodes an inactive enzyme while the two alleles found in cv. Delprim encode an active (TPS5A) and an inactive (TPS5B) enzyme (PubMed:15075399).</text>
</comment>
<comment type="similarity">
    <text evidence="10">Belongs to the terpene synthase family.</text>
</comment>
<gene>
    <name evidence="9" type="primary">TPS5A</name>
</gene>
<accession>Q6JD70</accession>
<keyword id="KW-0963">Cytoplasm</keyword>
<keyword id="KW-0456">Lyase</keyword>
<keyword id="KW-0460">Magnesium</keyword>
<keyword id="KW-0464">Manganese</keyword>
<keyword id="KW-0479">Metal-binding</keyword>
<keyword id="KW-0611">Plant defense</keyword>
<keyword id="KW-1185">Reference proteome</keyword>
<evidence type="ECO:0000250" key="1">
    <source>
        <dbReference type="UniProtKB" id="A0A1C9J6A7"/>
    </source>
</evidence>
<evidence type="ECO:0000250" key="2">
    <source>
        <dbReference type="UniProtKB" id="Q40577"/>
    </source>
</evidence>
<evidence type="ECO:0000250" key="3">
    <source>
        <dbReference type="UniProtKB" id="Q5GJ60"/>
    </source>
</evidence>
<evidence type="ECO:0000250" key="4">
    <source>
        <dbReference type="UniProtKB" id="Q6JD73"/>
    </source>
</evidence>
<evidence type="ECO:0000250" key="5">
    <source>
        <dbReference type="UniProtKB" id="Q6Q3H2"/>
    </source>
</evidence>
<evidence type="ECO:0000269" key="6">
    <source>
    </source>
</evidence>
<evidence type="ECO:0000269" key="7">
    <source>
    </source>
</evidence>
<evidence type="ECO:0000269" key="8">
    <source>
    </source>
</evidence>
<evidence type="ECO:0000303" key="9">
    <source>
    </source>
</evidence>
<evidence type="ECO:0000305" key="10"/>
<evidence type="ECO:0000305" key="11">
    <source>
    </source>
</evidence>
<evidence type="ECO:0000305" key="12">
    <source>
    </source>
</evidence>
<proteinExistence type="evidence at protein level"/>
<reference key="1">
    <citation type="journal article" date="2004" name="Plant Cell">
        <title>The variability of sesquiterpenes emitted from two Zea mays cultivars is controlled by allelic variation of two terpene synthase genes encoding stereoselective multiple product enzymes.</title>
        <authorList>
            <person name="Koellner T.G."/>
            <person name="Schnee C."/>
            <person name="Gershenzon J."/>
            <person name="Degenhardt J."/>
        </authorList>
    </citation>
    <scope>NUCLEOTIDE SEQUENCE [MRNA]</scope>
    <scope>FUNCTION</scope>
    <scope>CATALYTIC ACTIVITY</scope>
    <scope>COFACTOR</scope>
    <scope>3D-STRUCTURE MODELING</scope>
    <scope>MUTAGENESIS OF SER-407; GLY-409; ALA-410; ASN-411 AND VAL-455</scope>
    <scope>TISSUE SPECIFICITY</scope>
    <source>
        <strain>cv. Delprim</strain>
    </source>
</reference>
<reference key="2">
    <citation type="journal article" date="2011" name="J. Chem. Ecol.">
        <title>Attractiveness of constitutive and herbivore-induced sesquiterpene blends of maize to the parasitic wasp Cotesia marginiventris (Cresson).</title>
        <authorList>
            <person name="Fontana A."/>
            <person name="Held M."/>
            <person name="Fantaye C.A."/>
            <person name="Turlings T.C."/>
            <person name="Degenhardt J."/>
            <person name="Gershenzon J."/>
        </authorList>
    </citation>
    <scope>FUNCTION</scope>
    <scope>CATALYTIC ACTIVITY</scope>
</reference>
<reference key="3">
    <citation type="journal article" date="2015" name="Org. Biomol. Chem.">
        <title>Substrate geometry controls the cyclization cascade in multiproduct terpene synthases from Zea mays.</title>
        <authorList>
            <person name="Vattekkatte A."/>
            <person name="Gatto N."/>
            <person name="Koellner T.G."/>
            <person name="Degenhardt J."/>
            <person name="Gershenzon J."/>
            <person name="Boland W."/>
        </authorList>
    </citation>
    <scope>FUNCTION</scope>
    <scope>CATALYTIC ACTIVITY</scope>
</reference>
<reference key="4">
    <citation type="journal article" date="2019" name="Planta">
        <title>Biosynthesis and function of terpenoid defense compounds in maize (Zea mays).</title>
        <authorList>
            <person name="Block A.K."/>
            <person name="Vaughan M.M."/>
            <person name="Schmelz E.A."/>
            <person name="Christensen S.A."/>
        </authorList>
    </citation>
    <scope>REVIEW</scope>
</reference>
<dbReference type="EC" id="4.2.3.102" evidence="6 7 8"/>
<dbReference type="EC" id="4.2.3.55" evidence="6 7 8"/>
<dbReference type="EC" id="4.2.3.54" evidence="6 8"/>
<dbReference type="EC" id="4.2.3.-" evidence="6 8"/>
<dbReference type="EC" id="4.2.3.47" evidence="6 8"/>
<dbReference type="EC" id="4.2.3.94" evidence="6 8"/>
<dbReference type="EMBL" id="AY518313">
    <property type="protein sequence ID" value="AAS88574.1"/>
    <property type="molecule type" value="mRNA"/>
</dbReference>
<dbReference type="SMR" id="Q6JD70"/>
<dbReference type="STRING" id="4577.Q6JD70"/>
<dbReference type="MaizeGDB" id="1219892"/>
<dbReference type="InParanoid" id="Q6JD70"/>
<dbReference type="UniPathway" id="UPA00213"/>
<dbReference type="Proteomes" id="UP000007305">
    <property type="component" value="Unplaced"/>
</dbReference>
<dbReference type="ExpressionAtlas" id="Q6JD70">
    <property type="expression patterns" value="baseline and differential"/>
</dbReference>
<dbReference type="GO" id="GO:0005737">
    <property type="term" value="C:cytoplasm"/>
    <property type="evidence" value="ECO:0007669"/>
    <property type="project" value="UniProtKB-SubCell"/>
</dbReference>
<dbReference type="GO" id="GO:0102060">
    <property type="term" value="F:endo-alpha-bergamotene synthase activity"/>
    <property type="evidence" value="ECO:0007669"/>
    <property type="project" value="UniProtKB-EC"/>
</dbReference>
<dbReference type="GO" id="GO:0102064">
    <property type="term" value="F:gamma-curcumene synthase activity"/>
    <property type="evidence" value="ECO:0007669"/>
    <property type="project" value="UniProtKB-EC"/>
</dbReference>
<dbReference type="GO" id="GO:0000287">
    <property type="term" value="F:magnesium ion binding"/>
    <property type="evidence" value="ECO:0007669"/>
    <property type="project" value="InterPro"/>
</dbReference>
<dbReference type="GO" id="GO:0102304">
    <property type="term" value="F:sesquithujene synthase activity"/>
    <property type="evidence" value="ECO:0007669"/>
    <property type="project" value="UniProtKB-EC"/>
</dbReference>
<dbReference type="GO" id="GO:0010333">
    <property type="term" value="F:terpene synthase activity"/>
    <property type="evidence" value="ECO:0007669"/>
    <property type="project" value="InterPro"/>
</dbReference>
<dbReference type="GO" id="GO:0006952">
    <property type="term" value="P:defense response"/>
    <property type="evidence" value="ECO:0007669"/>
    <property type="project" value="UniProtKB-KW"/>
</dbReference>
<dbReference type="GO" id="GO:0016102">
    <property type="term" value="P:diterpenoid biosynthetic process"/>
    <property type="evidence" value="ECO:0007669"/>
    <property type="project" value="InterPro"/>
</dbReference>
<dbReference type="CDD" id="cd00684">
    <property type="entry name" value="Terpene_cyclase_plant_C1"/>
    <property type="match status" value="1"/>
</dbReference>
<dbReference type="FunFam" id="1.10.600.10:FF:000007">
    <property type="entry name" value="Isoprene synthase, chloroplastic"/>
    <property type="match status" value="1"/>
</dbReference>
<dbReference type="Gene3D" id="1.10.600.10">
    <property type="entry name" value="Farnesyl Diphosphate Synthase"/>
    <property type="match status" value="1"/>
</dbReference>
<dbReference type="Gene3D" id="1.50.10.130">
    <property type="entry name" value="Terpene synthase, N-terminal domain"/>
    <property type="match status" value="1"/>
</dbReference>
<dbReference type="InterPro" id="IPR008949">
    <property type="entry name" value="Isoprenoid_synthase_dom_sf"/>
</dbReference>
<dbReference type="InterPro" id="IPR034741">
    <property type="entry name" value="Terpene_cyclase-like_1_C"/>
</dbReference>
<dbReference type="InterPro" id="IPR044814">
    <property type="entry name" value="Terpene_cyclase_plant_C1"/>
</dbReference>
<dbReference type="InterPro" id="IPR001906">
    <property type="entry name" value="Terpene_synth_N"/>
</dbReference>
<dbReference type="InterPro" id="IPR036965">
    <property type="entry name" value="Terpene_synth_N_sf"/>
</dbReference>
<dbReference type="InterPro" id="IPR050148">
    <property type="entry name" value="Terpene_synthase-like"/>
</dbReference>
<dbReference type="InterPro" id="IPR005630">
    <property type="entry name" value="Terpene_synthase_metal-bd"/>
</dbReference>
<dbReference type="InterPro" id="IPR008930">
    <property type="entry name" value="Terpenoid_cyclase/PrenylTrfase"/>
</dbReference>
<dbReference type="PANTHER" id="PTHR31225:SF168">
    <property type="entry name" value="INACTIVE SESQUITHUJENE SYNTHASE"/>
    <property type="match status" value="1"/>
</dbReference>
<dbReference type="PANTHER" id="PTHR31225">
    <property type="entry name" value="OS04G0344100 PROTEIN-RELATED"/>
    <property type="match status" value="1"/>
</dbReference>
<dbReference type="Pfam" id="PF01397">
    <property type="entry name" value="Terpene_synth"/>
    <property type="match status" value="1"/>
</dbReference>
<dbReference type="Pfam" id="PF03936">
    <property type="entry name" value="Terpene_synth_C"/>
    <property type="match status" value="1"/>
</dbReference>
<dbReference type="SFLD" id="SFLDS00005">
    <property type="entry name" value="Isoprenoid_Synthase_Type_I"/>
    <property type="match status" value="1"/>
</dbReference>
<dbReference type="SFLD" id="SFLDG01019">
    <property type="entry name" value="Terpene_Cyclase_Like_1_C_Termi"/>
    <property type="match status" value="1"/>
</dbReference>
<dbReference type="SUPFAM" id="SSF48239">
    <property type="entry name" value="Terpenoid cyclases/Protein prenyltransferases"/>
    <property type="match status" value="1"/>
</dbReference>
<dbReference type="SUPFAM" id="SSF48576">
    <property type="entry name" value="Terpenoid synthases"/>
    <property type="match status" value="1"/>
</dbReference>
<feature type="chain" id="PRO_0000418851" description="Sesquithujene synthase A">
    <location>
        <begin position="1"/>
        <end position="554"/>
    </location>
</feature>
<feature type="region of interest" description="Determine the stereoselectivity of the enzyme">
    <location>
        <begin position="407"/>
        <end position="411"/>
    </location>
</feature>
<feature type="short sequence motif" description="DDXXD motif" evidence="1">
    <location>
        <begin position="308"/>
        <end position="312"/>
    </location>
</feature>
<feature type="binding site" evidence="2">
    <location>
        <position position="308"/>
    </location>
    <ligand>
        <name>Mg(2+)</name>
        <dbReference type="ChEBI" id="CHEBI:18420"/>
        <label>1</label>
    </ligand>
</feature>
<feature type="binding site" evidence="2">
    <location>
        <position position="308"/>
    </location>
    <ligand>
        <name>Mg(2+)</name>
        <dbReference type="ChEBI" id="CHEBI:18420"/>
        <label>2</label>
    </ligand>
</feature>
<feature type="binding site" evidence="1">
    <location>
        <position position="308"/>
    </location>
    <ligand>
        <name>substrate</name>
    </ligand>
</feature>
<feature type="binding site" evidence="2">
    <location>
        <position position="312"/>
    </location>
    <ligand>
        <name>Mg(2+)</name>
        <dbReference type="ChEBI" id="CHEBI:18420"/>
        <label>1</label>
    </ligand>
</feature>
<feature type="binding site" evidence="2">
    <location>
        <position position="312"/>
    </location>
    <ligand>
        <name>Mg(2+)</name>
        <dbReference type="ChEBI" id="CHEBI:18420"/>
        <label>2</label>
    </ligand>
</feature>
<feature type="binding site" evidence="1">
    <location>
        <position position="312"/>
    </location>
    <ligand>
        <name>substrate</name>
    </ligand>
</feature>
<feature type="binding site" evidence="1">
    <location>
        <position position="449"/>
    </location>
    <ligand>
        <name>substrate</name>
    </ligand>
</feature>
<feature type="binding site" evidence="2">
    <location>
        <position position="452"/>
    </location>
    <ligand>
        <name>Mg(2+)</name>
        <dbReference type="ChEBI" id="CHEBI:18420"/>
        <label>3</label>
    </ligand>
</feature>
<feature type="binding site" evidence="1">
    <location>
        <position position="452"/>
    </location>
    <ligand>
        <name>substrate</name>
    </ligand>
</feature>
<feature type="binding site" evidence="2">
    <location>
        <position position="456"/>
    </location>
    <ligand>
        <name>Mg(2+)</name>
        <dbReference type="ChEBI" id="CHEBI:18420"/>
        <label>3</label>
    </ligand>
</feature>
<feature type="binding site" evidence="2">
    <location>
        <position position="460"/>
    </location>
    <ligand>
        <name>Mg(2+)</name>
        <dbReference type="ChEBI" id="CHEBI:18420"/>
        <label>3</label>
    </ligand>
</feature>
<feature type="mutagenesis site" description="No effect on the product profile. Production of (S)-beta-bisabolene and 7-epi-sesquithujene; when associated with A-409, T-410 and I-411." evidence="6">
    <original>S</original>
    <variation>T</variation>
    <location>
        <position position="407"/>
    </location>
</feature>
<feature type="mutagenesis site" description="Altered product specificity and production of mostly (S)-beta-bisabolene. Formation of 7-epi-sesquithujene and sesquisabinene A; when associated with T-410. Production of (S)-beta-bisabolene and 7-epi-sesquithujene; when associated with T-407, T-410 and I-411." evidence="6">
    <original>G</original>
    <variation>A</variation>
    <location>
        <position position="409"/>
    </location>
</feature>
<feature type="mutagenesis site" description="No effect on the product profile. Formation of (S)-beta-bisabolene, 7-epi-sesquithujene and sesquisabinene A; when associated with A-409. Production of (S)-beta-bisabolene and 7-epi-sesquithujene; when associated with T-407, A-409 and I-411." evidence="6">
    <original>A</original>
    <variation>T</variation>
    <location>
        <position position="410"/>
    </location>
</feature>
<feature type="mutagenesis site" description="No effect on the product profile. Production of (S)-beta-bisabolene and 7-epi-sesquithujene; when associated with T-407, A-409 and T-410." evidence="6">
    <original>N</original>
    <variation>I</variation>
    <location>
        <position position="411"/>
    </location>
</feature>
<feature type="mutagenesis site" description="60% activity and increased proportion of (E)-beta-farnesene." evidence="6">
    <original>V</original>
    <variation>E</variation>
    <location>
        <position position="455"/>
    </location>
</feature>
<organism>
    <name type="scientific">Zea mays</name>
    <name type="common">Maize</name>
    <dbReference type="NCBI Taxonomy" id="4577"/>
    <lineage>
        <taxon>Eukaryota</taxon>
        <taxon>Viridiplantae</taxon>
        <taxon>Streptophyta</taxon>
        <taxon>Embryophyta</taxon>
        <taxon>Tracheophyta</taxon>
        <taxon>Spermatophyta</taxon>
        <taxon>Magnoliopsida</taxon>
        <taxon>Liliopsida</taxon>
        <taxon>Poales</taxon>
        <taxon>Poaceae</taxon>
        <taxon>PACMAD clade</taxon>
        <taxon>Panicoideae</taxon>
        <taxon>Andropogonodae</taxon>
        <taxon>Andropogoneae</taxon>
        <taxon>Tripsacinae</taxon>
        <taxon>Zea</taxon>
    </lineage>
</organism>
<protein>
    <recommendedName>
        <fullName evidence="9">Sesquithujene synthase A</fullName>
        <ecNumber evidence="6 7 8">4.2.3.102</ecNumber>
    </recommendedName>
    <alternativeName>
        <fullName evidence="9">(S)-beta-bisabolene synthase</fullName>
        <ecNumber evidence="6 7 8">4.2.3.55</ecNumber>
    </alternativeName>
    <alternativeName>
        <fullName evidence="9">(Z)-alpha-bergamotene synthase</fullName>
        <ecNumber evidence="6 8">4.2.3.54</ecNumber>
    </alternativeName>
    <alternativeName>
        <fullName evidence="9">Beta-curcumene synthase</fullName>
        <ecNumber evidence="6 8">4.2.3.-</ecNumber>
    </alternativeName>
    <alternativeName>
        <fullName evidence="9">Beta-farnesene synthase</fullName>
        <ecNumber evidence="6 8">4.2.3.47</ecNumber>
    </alternativeName>
    <alternativeName>
        <fullName evidence="9">Gamma-curcumene synthase</fullName>
        <ecNumber evidence="6 8">4.2.3.94</ecNumber>
    </alternativeName>
    <alternativeName>
        <fullName evidence="9">Sesquisabinene B synthase</fullName>
        <ecNumber evidence="6 8">4.2.3.-</ecNumber>
    </alternativeName>
    <alternativeName>
        <fullName evidence="9">Terpene synthase 5</fullName>
        <shortName evidence="9">tps5-Del1</shortName>
    </alternativeName>
</protein>
<name>TPS5A_MAIZE</name>
<sequence length="554" mass="63778">MASPPAHRSSKAADEELPKASSTFHPSLWGSFFLTYQPPTAPQRANMKERAEVLRERVRKVLKGSTTDQLPETVNLILTLQRLGLGYYYENEIDKLLHQIYSNSDYNEKDLNLVSQRFYLLRKNGYDVPSDVFLNFKTEEGGFACAAADTRSLLSLYNAAYLRKHGEEVLDEAISSTRLRLQDLLGRLLPESPFAKEVSSSLRTPLFRRVGILEARNYIPIYEKEATRNEAVLELAKLNFNLQQLDFCEELKHCSAWWNEMIAKSKLTFVRDRIVEEYFWMNGACCDPPYSLSRIILTKITGLITIIDDMFDTHGTTEDCMKFAEAFGRWDESAIHLLPEYMKDFYILMLETFQSFEDALGPEKSYRVLYLKQAMERLVELYSKEIKWRDQDYVATMSEHLQVSAESIGANALTCSAYAGMGDMSITKETFEWALSFPQFIRTFGSFVRLSNDVVSTKREQTKDHSPSTVHCYMKEHGTTMDDACEKIKELIEDSWKDMLEQSLALKGLPKVVPQLVFDFSRTTDNMYRDRDALTSSEALKEMIQLLFVEPIPE</sequence>